<sequence length="501" mass="55748">MAPALHWLLLWVGSGMLPAQGTHLGIRLPLRSGLAGPPLGLRLPRETDEESEEPGRRGSFVEMVDNLRGKSGQGYYVEMTVGSPPQTLNILVDTGSSNFAVGAAPHPFLHRYYQRQLSSTYRDLRKGVYVPYTQGKWEGELGTDLVSIPHGPNVTVRANIAAITESDKFFINGSNWEGILGLAYAEIARPDDSLEPFFDSLVKQTHIPNIFSLQLCGAGFPLNQTEALASVGGSMIIGGIDHSLYTGSLWYTPIRREWYYEVIIVRVEINGQDLKMDCKEYNYDKSIVDSGTTNLRLPKKVFEAAVKSIKAASSTEKFPDGFWLGEQLVCWQAGTTPWNIFPVISLYLMGEVTNQSFRITILPQQYLRPVEDVATSQDDCYKFAVSQSSTGTVMGAVIMEGFYVVFDRARKRIGFAVSACHVHDEFRTAAVEGPFVTADMEDCGYNIPQTDESTLMTIAYVMAAICALFMLPLCLMVCQWRCLRCLRHQHDDFADDISLLK</sequence>
<keyword id="KW-0007">Acetylation</keyword>
<keyword id="KW-0064">Aspartyl protease</keyword>
<keyword id="KW-1003">Cell membrane</keyword>
<keyword id="KW-0966">Cell projection</keyword>
<keyword id="KW-0968">Cytoplasmic vesicle</keyword>
<keyword id="KW-0903">Direct protein sequencing</keyword>
<keyword id="KW-1015">Disulfide bond</keyword>
<keyword id="KW-0256">Endoplasmic reticulum</keyword>
<keyword id="KW-0967">Endosome</keyword>
<keyword id="KW-0325">Glycoprotein</keyword>
<keyword id="KW-0333">Golgi apparatus</keyword>
<keyword id="KW-0378">Hydrolase</keyword>
<keyword id="KW-1017">Isopeptide bond</keyword>
<keyword id="KW-0449">Lipoprotein</keyword>
<keyword id="KW-0458">Lysosome</keyword>
<keyword id="KW-0472">Membrane</keyword>
<keyword id="KW-0564">Palmitate</keyword>
<keyword id="KW-0597">Phosphoprotein</keyword>
<keyword id="KW-0645">Protease</keyword>
<keyword id="KW-1185">Reference proteome</keyword>
<keyword id="KW-0732">Signal</keyword>
<keyword id="KW-0812">Transmembrane</keyword>
<keyword id="KW-1133">Transmembrane helix</keyword>
<keyword id="KW-0832">Ubl conjugation</keyword>
<keyword id="KW-0865">Zymogen</keyword>
<protein>
    <recommendedName>
        <fullName evidence="16">Beta-secretase 1</fullName>
        <ecNumber evidence="15">3.4.23.46</ecNumber>
    </recommendedName>
    <alternativeName>
        <fullName>Aspartyl protease 2</fullName>
        <shortName>ASP2</shortName>
        <shortName>Asp 2</shortName>
    </alternativeName>
    <alternativeName>
        <fullName>Beta-site amyloid precursor protein cleaving enzyme 1</fullName>
        <shortName>Beta-site APP cleaving enzyme 1</shortName>
    </alternativeName>
    <alternativeName>
        <fullName>Memapsin-2</fullName>
    </alternativeName>
    <alternativeName>
        <fullName>Membrane-associated aspartic protease 2</fullName>
    </alternativeName>
</protein>
<reference key="1">
    <citation type="journal article" date="1999" name="Science">
        <title>Beta-secretase cleavage of Alzheimer's amyloid precursor protein by the transmembrane aspartic protease BACE.</title>
        <authorList>
            <person name="Vassar R."/>
            <person name="Bennett B.D."/>
            <person name="Babu-Khan S."/>
            <person name="Kahn S."/>
            <person name="Mendiaz E.A."/>
            <person name="Denis P."/>
            <person name="Teplow D.B."/>
            <person name="Ross S."/>
            <person name="Amarante P."/>
            <person name="Loeloff R."/>
            <person name="Luo Y."/>
            <person name="Fisher S."/>
            <person name="Fuller J."/>
            <person name="Edenson S."/>
            <person name="Lile J."/>
            <person name="Jarosinski M.A."/>
            <person name="Biere A.L."/>
            <person name="Curran E."/>
            <person name="Burgess T."/>
            <person name="Louis J.-C."/>
            <person name="Collins F."/>
            <person name="Treanor J."/>
            <person name="Rogers G."/>
            <person name="Citron M."/>
        </authorList>
    </citation>
    <scope>NUCLEOTIDE SEQUENCE [MRNA]</scope>
</reference>
<reference key="2">
    <citation type="submission" date="2000-01" db="EMBL/GenBank/DDBJ databases">
        <authorList>
            <person name="Bennett B.D."/>
            <person name="Vassar R."/>
            <person name="Citron M."/>
        </authorList>
    </citation>
    <scope>SEQUENCE REVISION TO 6 AND 81-87</scope>
</reference>
<reference key="3">
    <citation type="journal article" date="1999" name="Nature">
        <title>Membrane-anchored aspartyl protease with Alzheimer's disease beta-secretase activity.</title>
        <authorList>
            <person name="Yan R."/>
            <person name="Bienkowski M.J."/>
            <person name="Shuck M.E."/>
            <person name="Miao H."/>
            <person name="Tory M.C."/>
            <person name="Pauley A.M."/>
            <person name="Brashier J.R."/>
            <person name="Stratman N.C."/>
            <person name="Mathews W.R."/>
            <person name="Buhl A.E."/>
            <person name="Carter D.B."/>
            <person name="Tomasselli A.G."/>
            <person name="Parodi L.A."/>
            <person name="Heinrikson R.L."/>
            <person name="Gurney M.E."/>
        </authorList>
    </citation>
    <scope>NUCLEOTIDE SEQUENCE [MRNA]</scope>
</reference>
<reference key="4">
    <citation type="journal article" date="2005" name="Science">
        <title>The transcriptional landscape of the mammalian genome.</title>
        <authorList>
            <person name="Carninci P."/>
            <person name="Kasukawa T."/>
            <person name="Katayama S."/>
            <person name="Gough J."/>
            <person name="Frith M.C."/>
            <person name="Maeda N."/>
            <person name="Oyama R."/>
            <person name="Ravasi T."/>
            <person name="Lenhard B."/>
            <person name="Wells C."/>
            <person name="Kodzius R."/>
            <person name="Shimokawa K."/>
            <person name="Bajic V.B."/>
            <person name="Brenner S.E."/>
            <person name="Batalov S."/>
            <person name="Forrest A.R."/>
            <person name="Zavolan M."/>
            <person name="Davis M.J."/>
            <person name="Wilming L.G."/>
            <person name="Aidinis V."/>
            <person name="Allen J.E."/>
            <person name="Ambesi-Impiombato A."/>
            <person name="Apweiler R."/>
            <person name="Aturaliya R.N."/>
            <person name="Bailey T.L."/>
            <person name="Bansal M."/>
            <person name="Baxter L."/>
            <person name="Beisel K.W."/>
            <person name="Bersano T."/>
            <person name="Bono H."/>
            <person name="Chalk A.M."/>
            <person name="Chiu K.P."/>
            <person name="Choudhary V."/>
            <person name="Christoffels A."/>
            <person name="Clutterbuck D.R."/>
            <person name="Crowe M.L."/>
            <person name="Dalla E."/>
            <person name="Dalrymple B.P."/>
            <person name="de Bono B."/>
            <person name="Della Gatta G."/>
            <person name="di Bernardo D."/>
            <person name="Down T."/>
            <person name="Engstrom P."/>
            <person name="Fagiolini M."/>
            <person name="Faulkner G."/>
            <person name="Fletcher C.F."/>
            <person name="Fukushima T."/>
            <person name="Furuno M."/>
            <person name="Futaki S."/>
            <person name="Gariboldi M."/>
            <person name="Georgii-Hemming P."/>
            <person name="Gingeras T.R."/>
            <person name="Gojobori T."/>
            <person name="Green R.E."/>
            <person name="Gustincich S."/>
            <person name="Harbers M."/>
            <person name="Hayashi Y."/>
            <person name="Hensch T.K."/>
            <person name="Hirokawa N."/>
            <person name="Hill D."/>
            <person name="Huminiecki L."/>
            <person name="Iacono M."/>
            <person name="Ikeo K."/>
            <person name="Iwama A."/>
            <person name="Ishikawa T."/>
            <person name="Jakt M."/>
            <person name="Kanapin A."/>
            <person name="Katoh M."/>
            <person name="Kawasawa Y."/>
            <person name="Kelso J."/>
            <person name="Kitamura H."/>
            <person name="Kitano H."/>
            <person name="Kollias G."/>
            <person name="Krishnan S.P."/>
            <person name="Kruger A."/>
            <person name="Kummerfeld S.K."/>
            <person name="Kurochkin I.V."/>
            <person name="Lareau L.F."/>
            <person name="Lazarevic D."/>
            <person name="Lipovich L."/>
            <person name="Liu J."/>
            <person name="Liuni S."/>
            <person name="McWilliam S."/>
            <person name="Madan Babu M."/>
            <person name="Madera M."/>
            <person name="Marchionni L."/>
            <person name="Matsuda H."/>
            <person name="Matsuzawa S."/>
            <person name="Miki H."/>
            <person name="Mignone F."/>
            <person name="Miyake S."/>
            <person name="Morris K."/>
            <person name="Mottagui-Tabar S."/>
            <person name="Mulder N."/>
            <person name="Nakano N."/>
            <person name="Nakauchi H."/>
            <person name="Ng P."/>
            <person name="Nilsson R."/>
            <person name="Nishiguchi S."/>
            <person name="Nishikawa S."/>
            <person name="Nori F."/>
            <person name="Ohara O."/>
            <person name="Okazaki Y."/>
            <person name="Orlando V."/>
            <person name="Pang K.C."/>
            <person name="Pavan W.J."/>
            <person name="Pavesi G."/>
            <person name="Pesole G."/>
            <person name="Petrovsky N."/>
            <person name="Piazza S."/>
            <person name="Reed J."/>
            <person name="Reid J.F."/>
            <person name="Ring B.Z."/>
            <person name="Ringwald M."/>
            <person name="Rost B."/>
            <person name="Ruan Y."/>
            <person name="Salzberg S.L."/>
            <person name="Sandelin A."/>
            <person name="Schneider C."/>
            <person name="Schoenbach C."/>
            <person name="Sekiguchi K."/>
            <person name="Semple C.A."/>
            <person name="Seno S."/>
            <person name="Sessa L."/>
            <person name="Sheng Y."/>
            <person name="Shibata Y."/>
            <person name="Shimada H."/>
            <person name="Shimada K."/>
            <person name="Silva D."/>
            <person name="Sinclair B."/>
            <person name="Sperling S."/>
            <person name="Stupka E."/>
            <person name="Sugiura K."/>
            <person name="Sultana R."/>
            <person name="Takenaka Y."/>
            <person name="Taki K."/>
            <person name="Tammoja K."/>
            <person name="Tan S.L."/>
            <person name="Tang S."/>
            <person name="Taylor M.S."/>
            <person name="Tegner J."/>
            <person name="Teichmann S.A."/>
            <person name="Ueda H.R."/>
            <person name="van Nimwegen E."/>
            <person name="Verardo R."/>
            <person name="Wei C.L."/>
            <person name="Yagi K."/>
            <person name="Yamanishi H."/>
            <person name="Zabarovsky E."/>
            <person name="Zhu S."/>
            <person name="Zimmer A."/>
            <person name="Hide W."/>
            <person name="Bult C."/>
            <person name="Grimmond S.M."/>
            <person name="Teasdale R.D."/>
            <person name="Liu E.T."/>
            <person name="Brusic V."/>
            <person name="Quackenbush J."/>
            <person name="Wahlestedt C."/>
            <person name="Mattick J.S."/>
            <person name="Hume D.A."/>
            <person name="Kai C."/>
            <person name="Sasaki D."/>
            <person name="Tomaru Y."/>
            <person name="Fukuda S."/>
            <person name="Kanamori-Katayama M."/>
            <person name="Suzuki M."/>
            <person name="Aoki J."/>
            <person name="Arakawa T."/>
            <person name="Iida J."/>
            <person name="Imamura K."/>
            <person name="Itoh M."/>
            <person name="Kato T."/>
            <person name="Kawaji H."/>
            <person name="Kawagashira N."/>
            <person name="Kawashima T."/>
            <person name="Kojima M."/>
            <person name="Kondo S."/>
            <person name="Konno H."/>
            <person name="Nakano K."/>
            <person name="Ninomiya N."/>
            <person name="Nishio T."/>
            <person name="Okada M."/>
            <person name="Plessy C."/>
            <person name="Shibata K."/>
            <person name="Shiraki T."/>
            <person name="Suzuki S."/>
            <person name="Tagami M."/>
            <person name="Waki K."/>
            <person name="Watahiki A."/>
            <person name="Okamura-Oho Y."/>
            <person name="Suzuki H."/>
            <person name="Kawai J."/>
            <person name="Hayashizaki Y."/>
        </authorList>
    </citation>
    <scope>NUCLEOTIDE SEQUENCE [LARGE SCALE MRNA]</scope>
    <source>
        <strain>C57BL/6J</strain>
        <tissue>Aorta</tissue>
        <tissue>Head</tissue>
        <tissue>Testis</tissue>
    </source>
</reference>
<reference key="5">
    <citation type="journal article" date="2004" name="Genome Res.">
        <title>The status, quality, and expansion of the NIH full-length cDNA project: the Mammalian Gene Collection (MGC).</title>
        <authorList>
            <consortium name="The MGC Project Team"/>
        </authorList>
    </citation>
    <scope>NUCLEOTIDE SEQUENCE [LARGE SCALE MRNA]</scope>
    <source>
        <strain>C57BL/6J</strain>
        <tissue>Brain</tissue>
    </source>
</reference>
<reference key="6">
    <citation type="submission" date="2009-01" db="UniProtKB">
        <authorList>
            <person name="Lubec G."/>
            <person name="Sunyer B."/>
            <person name="Chen W.-Q."/>
        </authorList>
    </citation>
    <scope>PROTEIN SEQUENCE OF 301-307</scope>
    <scope>IDENTIFICATION BY MASS SPECTROMETRY</scope>
    <source>
        <strain>OF1</strain>
        <tissue>Hippocampus</tissue>
    </source>
</reference>
<reference key="7">
    <citation type="journal article" date="2005" name="J. Biol. Chem.">
        <title>Phenotypic and biochemical analyses of BACE1- and BACE2-deficient mice.</title>
        <authorList>
            <person name="Dominguez D."/>
            <person name="Tournoy J."/>
            <person name="Hartmann D."/>
            <person name="Huth T."/>
            <person name="Cryns K."/>
            <person name="Deforce S."/>
            <person name="Serneels L."/>
            <person name="Camacho I.E."/>
            <person name="Marjaux E."/>
            <person name="Craessaerts K."/>
            <person name="Roebroek A.J.M."/>
            <person name="Schwake M."/>
            <person name="D'Hooge R."/>
            <person name="Bach P."/>
            <person name="Kalinke U."/>
            <person name="Moechars D."/>
            <person name="Alzheimer C."/>
            <person name="Reiss K."/>
            <person name="Saftig P."/>
            <person name="De Strooper B."/>
        </authorList>
    </citation>
    <scope>DISRUPTION PHENOTYPE</scope>
</reference>
<reference key="8">
    <citation type="journal article" date="2006" name="J. Neurosci.">
        <title>Interaction of the cytosolic domains of sorLA/LR11 with the amyloid precursor protein (APP) and beta-secretase beta-site APP-cleaving enzyme.</title>
        <authorList>
            <person name="Spoelgen R."/>
            <person name="von Arnim C.A."/>
            <person name="Thomas A.V."/>
            <person name="Peltan I.D."/>
            <person name="Koker M."/>
            <person name="Deng A."/>
            <person name="Irizarry M.C."/>
            <person name="Andersen O.M."/>
            <person name="Willnow T.E."/>
            <person name="Hyman B.T."/>
        </authorList>
    </citation>
    <scope>INTERACTION WITH SORL1</scope>
</reference>
<reference key="9">
    <citation type="journal article" date="2009" name="J. Biol. Chem.">
        <title>Alzheimer disease Abeta production in the absence of S-palmitoylation-dependent targeting of BACE1 to lipid rafts.</title>
        <authorList>
            <person name="Vetrivel K.S."/>
            <person name="Meckler X."/>
            <person name="Chen Y."/>
            <person name="Nguyen P.D."/>
            <person name="Seidah N.G."/>
            <person name="Vassar R."/>
            <person name="Wong P.C."/>
            <person name="Fukata M."/>
            <person name="Kounnas M.Z."/>
            <person name="Thinakaran G."/>
        </authorList>
    </citation>
    <scope>PALMITOYLATION AT CYS-474; CYS-478; CYS-482 AND CYS-485</scope>
    <scope>MUTAGENESIS OF CYS-474; CYS-478; CYS-482 AND CYS-485</scope>
    <scope>SUBCELLULAR LOCATION</scope>
</reference>
<reference key="10">
    <citation type="journal article" date="2009" name="Nat. Neurosci.">
        <title>Nardilysin regulates axonal maturation and myelination in the central and peripheral nervous system.</title>
        <authorList>
            <person name="Ohno M."/>
            <person name="Hiraoka Y."/>
            <person name="Matsuoka T."/>
            <person name="Tomimoto H."/>
            <person name="Takao K."/>
            <person name="Miyakawa T."/>
            <person name="Oshima N."/>
            <person name="Kiyonari H."/>
            <person name="Kimura T."/>
            <person name="Kita T."/>
            <person name="Nishi E."/>
        </authorList>
    </citation>
    <scope>INTERACTION WITH NRDC AND NRG1</scope>
</reference>
<reference key="11">
    <citation type="journal article" date="2010" name="Cell">
        <title>A tissue-specific atlas of mouse protein phosphorylation and expression.</title>
        <authorList>
            <person name="Huttlin E.L."/>
            <person name="Jedrychowski M.P."/>
            <person name="Elias J.E."/>
            <person name="Goswami T."/>
            <person name="Rad R."/>
            <person name="Beausoleil S.A."/>
            <person name="Villen J."/>
            <person name="Haas W."/>
            <person name="Sowa M.E."/>
            <person name="Gygi S.P."/>
        </authorList>
    </citation>
    <scope>PHOSPHORYLATION [LARGE SCALE ANALYSIS] AT SER-498</scope>
    <scope>IDENTIFICATION BY MASS SPECTROMETRY [LARGE SCALE ANALYSIS]</scope>
    <source>
        <tissue>Brain</tissue>
        <tissue>Heart</tissue>
    </source>
</reference>
<reference key="12">
    <citation type="journal article" date="2010" name="J. Cell Sci.">
        <title>AT-1 is the ER membrane acetyl-CoA transporter and is essential for cell viability.</title>
        <authorList>
            <person name="Jonas M.C."/>
            <person name="Pehar M."/>
            <person name="Puglielli L."/>
        </authorList>
    </citation>
    <scope>ACETYLATION</scope>
</reference>
<reference key="13">
    <citation type="journal article" date="2013" name="Neuron">
        <title>Activity-induced convergence of APP and BACE-1 in acidic microdomains via an endocytosis-dependent pathway.</title>
        <authorList>
            <person name="Das U."/>
            <person name="Scott D.A."/>
            <person name="Ganguly A."/>
            <person name="Koo E.H."/>
            <person name="Tang Y."/>
            <person name="Roy S."/>
        </authorList>
    </citation>
    <scope>SUBCELLULAR LOCATION</scope>
</reference>
<reference key="14">
    <citation type="journal article" date="2015" name="EMBO Mol. Med.">
        <title>An aberrant sugar modification of BACE1 blocks its lysosomal targeting in Alzheimer's disease.</title>
        <authorList>
            <person name="Kizuka Y."/>
            <person name="Kitazume S."/>
            <person name="Fujinawa R."/>
            <person name="Saito T."/>
            <person name="Iwata N."/>
            <person name="Saido T.C."/>
            <person name="Nakano M."/>
            <person name="Yamaguchi Y."/>
            <person name="Hashimoto Y."/>
            <person name="Staufenbiel M."/>
            <person name="Hatsuta H."/>
            <person name="Murayama S."/>
            <person name="Manya H."/>
            <person name="Endo T."/>
            <person name="Taniguchi N."/>
        </authorList>
    </citation>
    <scope>GLYCOSYLATION</scope>
    <scope>SUBCELLULAR LOCATION</scope>
    <scope>DISRUPTION PHENOTYPE</scope>
</reference>
<reference key="15">
    <citation type="journal article" date="2016" name="Biochem. J.">
        <title>Bisecting GlcNAc modification stabilizes BACE1 protein under oxidative stress conditions.</title>
        <authorList>
            <person name="Kizuka Y."/>
            <person name="Nakano M."/>
            <person name="Kitazume S."/>
            <person name="Saito T."/>
            <person name="Saido T.C."/>
            <person name="Taniguchi N."/>
        </authorList>
    </citation>
    <scope>GLYCOSYLATION AT ASN-153; ASN-172; ASN-223 AND ASN-354</scope>
    <scope>INDUCTION BY OXIDATIVE STRESS</scope>
    <scope>MUTAGENESIS OF ASN-153; ASN-172; ASN-223 AND ASN-354</scope>
    <scope>SUBCELLULAR LOCATION</scope>
</reference>
<reference key="16">
    <citation type="journal article" date="2018" name="J. Mol. Cell Biol.">
        <title>alpha-secretase ADAM10 physically interacts with beta-secretase BACE1 in neurons and regulates CHL1 proteolysis.</title>
        <authorList>
            <person name="Wang X."/>
            <person name="Wang C."/>
            <person name="Pei G."/>
        </authorList>
    </citation>
    <scope>FUNCTION</scope>
    <scope>CATALYTIC ACTIVITY</scope>
    <scope>INTERACTION WITH ADAM10</scope>
    <scope>SUBCELLULAR LOCATION</scope>
    <scope>TISSUE SPECIFICITY</scope>
    <scope>MUTAGENESIS OF ASP-93</scope>
</reference>
<comment type="function">
    <text evidence="15">Responsible for the proteolytic processing of the amyloid precursor protein (APP) (PubMed:29325091). Cleaves at the N-terminus of the A-beta peptide sequence, between residues 671 and 672 of APP, leads to the generation and extracellular release of beta-cleaved soluble APP, and a corresponding cell-associated C-terminal fragment which is later released by gamma-secretase (PubMed:29325091). Cleaves CHL1 (PubMed:29325091).</text>
</comment>
<comment type="catalytic activity">
    <reaction evidence="15">
        <text>Broad endopeptidase specificity. Cleaves Glu-Val-Asn-Leu-|-Asp-Ala-Glu-Phe in the Swedish variant of Alzheimer's amyloid precursor protein.</text>
        <dbReference type="EC" id="3.4.23.46"/>
    </reaction>
</comment>
<comment type="activity regulation">
    <text evidence="2">Inhibited by RTN3 and RTN4.</text>
</comment>
<comment type="subunit">
    <text evidence="2 8 10 15">Monomer. Interacts (via DXXLL motif) with GGA1, GGA2 and GGA3 (via their VHS domain); the interaction highly increases when BACE1 is phosphorylated at Ser-498. Interacts with RTN1; RTN2; RTN3 and RTN4; the interaction leads to inhibition of amyloid precursor protein processing (By similarity). Interacts with SNX6. Interacts with PCSK9. Interacts with NAT8 and NAT8B. Interacts with BIN1 (By similarity). Interacts (via extracellular domain) with ADAM10 (via extracellular domain) (PubMed:29325091). Interacts with SORL1; this interaction may affect binding with APP and hence reduce APP cleavage (PubMed:16407538). Interacts with NRDC AND NRG1 (PubMed:19935654).</text>
</comment>
<comment type="subcellular location">
    <subcellularLocation>
        <location evidence="2">Cell membrane</location>
        <topology evidence="16">Single-pass type I membrane protein</topology>
    </subcellularLocation>
    <subcellularLocation>
        <location evidence="9">Golgi apparatus</location>
        <location evidence="9">trans-Golgi network</location>
    </subcellularLocation>
    <subcellularLocation>
        <location evidence="2">Endoplasmic reticulum</location>
    </subcellularLocation>
    <subcellularLocation>
        <location evidence="9">Endosome</location>
    </subcellularLocation>
    <subcellularLocation>
        <location evidence="13">Late endosome</location>
    </subcellularLocation>
    <subcellularLocation>
        <location evidence="13">Early endosome</location>
    </subcellularLocation>
    <subcellularLocation>
        <location evidence="14">Cell surface</location>
    </subcellularLocation>
    <subcellularLocation>
        <location evidence="2">Cytoplasmic vesicle membrane</location>
    </subcellularLocation>
    <subcellularLocation>
        <location evidence="9">Membrane raft</location>
    </subcellularLocation>
    <subcellularLocation>
        <location evidence="13">Lysosome</location>
    </subcellularLocation>
    <subcellularLocation>
        <location evidence="12">Recycling endosome</location>
    </subcellularLocation>
    <subcellularLocation>
        <location evidence="15">Cell projection</location>
        <location evidence="15">Axon</location>
    </subcellularLocation>
    <subcellularLocation>
        <location evidence="15">Cell projection</location>
        <location evidence="15">Dendrite</location>
    </subcellularLocation>
    <text evidence="2 13">Predominantly localized to the later Golgi/trans-Golgi network (TGN) and minimally detectable in the early Golgi compartments. A small portion is also found in the endoplasmic reticulum, endosomes and on the cell surface (By similarity). Colocalization with APP in early endosomes is due to addition of bisecting N-acetylglucosamine which blocks targeting to late endosomes and lysosomes (PubMed:25592972). Retrogradly transported from endosomal compartments to the trans-Golgi network in a phosphorylation- and GGA1- dependent manner (By similarity).</text>
</comment>
<comment type="tissue specificity">
    <text evidence="15">Expressed in the brain, specifically in neurons and astrocytes (at protein level).</text>
</comment>
<comment type="induction">
    <text evidence="14">In brain oxidative stress induced by amyloid-beta deposition during aging increases protein levels.</text>
</comment>
<comment type="domain">
    <text evidence="2">DXXLL motif is required for a proper endocytosis and retrograde transport to the trans-Golgi network, as well as for regulation of lysosomal degradation.</text>
</comment>
<comment type="domain">
    <text evidence="2">The transmembrane domain is necessary for its activity. It determines its late Golgi localization and access to its substrate, APP.</text>
</comment>
<comment type="PTM">
    <text evidence="1 2 13 14">N-Glycosylated (By similarity). Addition of a bisecting N-acetylglucosamine by MGAT3 blocks lysosomal targeting, further degradation and is required for maintaining stability under stress conditions (PubMed:25592972, PubMed:26467158).</text>
</comment>
<comment type="PTM">
    <text evidence="9">Palmitoylation mediates lipid raft localization.</text>
</comment>
<comment type="PTM">
    <text evidence="2 11">Acetylated in the endoplasmic reticulum at Lys-126, Lys-275, Lys-279, Lys-285, Lys-299, Lys-300 and Lys-307 (PubMed:20826464). Acetylation by NAT8 and NAT8B is transient and deacetylation probably occurs in the Golgi. Acetylation regulates the maturation, the transport to the plasma membrane, the stability and the expression of the protein.</text>
</comment>
<comment type="PTM">
    <text evidence="2">Ubiquitinated at Lys-501, ubiquitination leads to lysosomal degradation. Monoubiquitinated and 'Lys-63'-linked polyubitinated. Deubiquitnated by USP8; inhibits lysosomal degradation.</text>
</comment>
<comment type="PTM">
    <text evidence="2">Phosphorylation at Ser-498 is required for interaction with GGA1 and retrograded transport from endosomal compartments to the trans-Golgi network. Non-phosphorylated BACE1 enters a direct recycling route to the cell surface.</text>
</comment>
<comment type="disruption phenotype">
    <text evidence="7 13">Mice show a higher mortality rate early in life.</text>
</comment>
<comment type="similarity">
    <text evidence="16">Belongs to the peptidase A1 family.</text>
</comment>
<dbReference type="EC" id="3.4.23.46" evidence="15"/>
<dbReference type="EMBL" id="AF190726">
    <property type="protein sequence ID" value="AAF04143.2"/>
    <property type="molecule type" value="mRNA"/>
</dbReference>
<dbReference type="EMBL" id="AF200346">
    <property type="protein sequence ID" value="AAF17082.1"/>
    <property type="molecule type" value="mRNA"/>
</dbReference>
<dbReference type="EMBL" id="AK014464">
    <property type="protein sequence ID" value="BAB29370.1"/>
    <property type="molecule type" value="mRNA"/>
</dbReference>
<dbReference type="EMBL" id="AK033112">
    <property type="protein sequence ID" value="BAC28156.1"/>
    <property type="molecule type" value="mRNA"/>
</dbReference>
<dbReference type="EMBL" id="AK041285">
    <property type="protein sequence ID" value="BAC30889.1"/>
    <property type="molecule type" value="mRNA"/>
</dbReference>
<dbReference type="EMBL" id="BC048189">
    <property type="protein sequence ID" value="AAH48189.1"/>
    <property type="molecule type" value="mRNA"/>
</dbReference>
<dbReference type="CCDS" id="CCDS23135.1"/>
<dbReference type="RefSeq" id="NP_001139419.1">
    <property type="nucleotide sequence ID" value="NM_001145947.2"/>
</dbReference>
<dbReference type="RefSeq" id="NP_035922.4">
    <property type="nucleotide sequence ID" value="NM_011792.6"/>
</dbReference>
<dbReference type="BMRB" id="P56818"/>
<dbReference type="SMR" id="P56818"/>
<dbReference type="BioGRID" id="204741">
    <property type="interactions" value="8"/>
</dbReference>
<dbReference type="CORUM" id="P56818"/>
<dbReference type="FunCoup" id="P56818">
    <property type="interactions" value="812"/>
</dbReference>
<dbReference type="IntAct" id="P56818">
    <property type="interactions" value="2"/>
</dbReference>
<dbReference type="MINT" id="P56818"/>
<dbReference type="STRING" id="10090.ENSMUSP00000034591"/>
<dbReference type="BindingDB" id="P56818"/>
<dbReference type="ChEMBL" id="CHEMBL4593"/>
<dbReference type="GuidetoPHARMACOLOGY" id="2330"/>
<dbReference type="MEROPS" id="A01.004"/>
<dbReference type="GlyCosmos" id="P56818">
    <property type="glycosylation" value="4 sites, No reported glycans"/>
</dbReference>
<dbReference type="GlyGen" id="P56818">
    <property type="glycosylation" value="4 sites, 1 N-linked glycan (1 site)"/>
</dbReference>
<dbReference type="iPTMnet" id="P56818"/>
<dbReference type="PhosphoSitePlus" id="P56818"/>
<dbReference type="SwissPalm" id="P56818"/>
<dbReference type="jPOST" id="P56818"/>
<dbReference type="PaxDb" id="10090-ENSMUSP00000034591"/>
<dbReference type="PeptideAtlas" id="P56818"/>
<dbReference type="ProteomicsDB" id="273594"/>
<dbReference type="Pumba" id="P56818"/>
<dbReference type="ABCD" id="P56818">
    <property type="antibodies" value="1 sequenced antibody"/>
</dbReference>
<dbReference type="Antibodypedia" id="4285">
    <property type="antibodies" value="918 antibodies from 45 providers"/>
</dbReference>
<dbReference type="DNASU" id="23821"/>
<dbReference type="Ensembl" id="ENSMUST00000034591.11">
    <property type="protein sequence ID" value="ENSMUSP00000034591.5"/>
    <property type="gene ID" value="ENSMUSG00000032086.13"/>
</dbReference>
<dbReference type="GeneID" id="23821"/>
<dbReference type="KEGG" id="mmu:23821"/>
<dbReference type="UCSC" id="uc009pgh.2">
    <property type="organism name" value="mouse"/>
</dbReference>
<dbReference type="AGR" id="MGI:1346542"/>
<dbReference type="CTD" id="23621"/>
<dbReference type="MGI" id="MGI:1346542">
    <property type="gene designation" value="Bace1"/>
</dbReference>
<dbReference type="VEuPathDB" id="HostDB:ENSMUSG00000032086"/>
<dbReference type="eggNOG" id="KOG1339">
    <property type="taxonomic scope" value="Eukaryota"/>
</dbReference>
<dbReference type="GeneTree" id="ENSGT00940000157786"/>
<dbReference type="InParanoid" id="P56818"/>
<dbReference type="OMA" id="VLMEAFY"/>
<dbReference type="OrthoDB" id="2747330at2759"/>
<dbReference type="PhylomeDB" id="P56818"/>
<dbReference type="TreeFam" id="TF329595"/>
<dbReference type="BRENDA" id="3.4.23.46">
    <property type="organism ID" value="3474"/>
</dbReference>
<dbReference type="BioGRID-ORCS" id="23821">
    <property type="hits" value="2 hits in 78 CRISPR screens"/>
</dbReference>
<dbReference type="ChiTaRS" id="Bace1">
    <property type="organism name" value="mouse"/>
</dbReference>
<dbReference type="PRO" id="PR:P56818"/>
<dbReference type="Proteomes" id="UP000000589">
    <property type="component" value="Chromosome 9"/>
</dbReference>
<dbReference type="RNAct" id="P56818">
    <property type="molecule type" value="protein"/>
</dbReference>
<dbReference type="Bgee" id="ENSMUSG00000032086">
    <property type="expression patterns" value="Expressed in external carotid artery and 245 other cell types or tissues"/>
</dbReference>
<dbReference type="ExpressionAtlas" id="P56818">
    <property type="expression patterns" value="baseline and differential"/>
</dbReference>
<dbReference type="GO" id="GO:0030424">
    <property type="term" value="C:axon"/>
    <property type="evidence" value="ECO:0000314"/>
    <property type="project" value="MGI"/>
</dbReference>
<dbReference type="GO" id="GO:0009986">
    <property type="term" value="C:cell surface"/>
    <property type="evidence" value="ECO:0000314"/>
    <property type="project" value="MGI"/>
</dbReference>
<dbReference type="GO" id="GO:0031410">
    <property type="term" value="C:cytoplasmic vesicle"/>
    <property type="evidence" value="ECO:0000314"/>
    <property type="project" value="MGI"/>
</dbReference>
<dbReference type="GO" id="GO:0030659">
    <property type="term" value="C:cytoplasmic vesicle membrane"/>
    <property type="evidence" value="ECO:0007669"/>
    <property type="project" value="UniProtKB-SubCell"/>
</dbReference>
<dbReference type="GO" id="GO:0030425">
    <property type="term" value="C:dendrite"/>
    <property type="evidence" value="ECO:0007669"/>
    <property type="project" value="UniProtKB-SubCell"/>
</dbReference>
<dbReference type="GO" id="GO:0005769">
    <property type="term" value="C:early endosome"/>
    <property type="evidence" value="ECO:0000314"/>
    <property type="project" value="MGI"/>
</dbReference>
<dbReference type="GO" id="GO:0005783">
    <property type="term" value="C:endoplasmic reticulum"/>
    <property type="evidence" value="ECO:0007669"/>
    <property type="project" value="UniProtKB-SubCell"/>
</dbReference>
<dbReference type="GO" id="GO:0005768">
    <property type="term" value="C:endosome"/>
    <property type="evidence" value="ECO:0000314"/>
    <property type="project" value="UniProtKB"/>
</dbReference>
<dbReference type="GO" id="GO:0005794">
    <property type="term" value="C:Golgi apparatus"/>
    <property type="evidence" value="ECO:0000250"/>
    <property type="project" value="UniProtKB"/>
</dbReference>
<dbReference type="GO" id="GO:0098686">
    <property type="term" value="C:hippocampal mossy fiber to CA3 synapse"/>
    <property type="evidence" value="ECO:0000314"/>
    <property type="project" value="SynGO"/>
</dbReference>
<dbReference type="GO" id="GO:0005770">
    <property type="term" value="C:late endosome"/>
    <property type="evidence" value="ECO:0000250"/>
    <property type="project" value="UniProtKB"/>
</dbReference>
<dbReference type="GO" id="GO:0005764">
    <property type="term" value="C:lysosome"/>
    <property type="evidence" value="ECO:0000250"/>
    <property type="project" value="UniProtKB"/>
</dbReference>
<dbReference type="GO" id="GO:0016020">
    <property type="term" value="C:membrane"/>
    <property type="evidence" value="ECO:0000314"/>
    <property type="project" value="MGI"/>
</dbReference>
<dbReference type="GO" id="GO:0045121">
    <property type="term" value="C:membrane raft"/>
    <property type="evidence" value="ECO:0007669"/>
    <property type="project" value="UniProtKB-SubCell"/>
</dbReference>
<dbReference type="GO" id="GO:0005771">
    <property type="term" value="C:multivesicular body"/>
    <property type="evidence" value="ECO:0007669"/>
    <property type="project" value="Ensembl"/>
</dbReference>
<dbReference type="GO" id="GO:0043025">
    <property type="term" value="C:neuronal cell body"/>
    <property type="evidence" value="ECO:0007669"/>
    <property type="project" value="Ensembl"/>
</dbReference>
<dbReference type="GO" id="GO:0005886">
    <property type="term" value="C:plasma membrane"/>
    <property type="evidence" value="ECO:0000314"/>
    <property type="project" value="UniProtKB"/>
</dbReference>
<dbReference type="GO" id="GO:0098793">
    <property type="term" value="C:presynapse"/>
    <property type="evidence" value="ECO:0000314"/>
    <property type="project" value="SynGO"/>
</dbReference>
<dbReference type="GO" id="GO:0055037">
    <property type="term" value="C:recycling endosome"/>
    <property type="evidence" value="ECO:0000314"/>
    <property type="project" value="UniProtKB"/>
</dbReference>
<dbReference type="GO" id="GO:0008021">
    <property type="term" value="C:synaptic vesicle"/>
    <property type="evidence" value="ECO:0007669"/>
    <property type="project" value="Ensembl"/>
</dbReference>
<dbReference type="GO" id="GO:0005802">
    <property type="term" value="C:trans-Golgi network"/>
    <property type="evidence" value="ECO:0000314"/>
    <property type="project" value="UniProtKB"/>
</dbReference>
<dbReference type="GO" id="GO:0001540">
    <property type="term" value="F:amyloid-beta binding"/>
    <property type="evidence" value="ECO:0007669"/>
    <property type="project" value="Ensembl"/>
</dbReference>
<dbReference type="GO" id="GO:0004190">
    <property type="term" value="F:aspartic-type endopeptidase activity"/>
    <property type="evidence" value="ECO:0000314"/>
    <property type="project" value="MGI"/>
</dbReference>
<dbReference type="GO" id="GO:0004175">
    <property type="term" value="F:endopeptidase activity"/>
    <property type="evidence" value="ECO:0000314"/>
    <property type="project" value="MGI"/>
</dbReference>
<dbReference type="GO" id="GO:0120283">
    <property type="term" value="F:protein serine/threonine kinase binding"/>
    <property type="evidence" value="ECO:0007669"/>
    <property type="project" value="Ensembl"/>
</dbReference>
<dbReference type="GO" id="GO:0042987">
    <property type="term" value="P:amyloid precursor protein catabolic process"/>
    <property type="evidence" value="ECO:0000316"/>
    <property type="project" value="ARUK-UCL"/>
</dbReference>
<dbReference type="GO" id="GO:0034205">
    <property type="term" value="P:amyloid-beta formation"/>
    <property type="evidence" value="ECO:0007669"/>
    <property type="project" value="Ensembl"/>
</dbReference>
<dbReference type="GO" id="GO:0050435">
    <property type="term" value="P:amyloid-beta metabolic process"/>
    <property type="evidence" value="ECO:0000314"/>
    <property type="project" value="MGI"/>
</dbReference>
<dbReference type="GO" id="GO:1904646">
    <property type="term" value="P:cellular response to amyloid-beta"/>
    <property type="evidence" value="ECO:0007669"/>
    <property type="project" value="Ensembl"/>
</dbReference>
<dbReference type="GO" id="GO:0071280">
    <property type="term" value="P:cellular response to copper ion"/>
    <property type="evidence" value="ECO:0007669"/>
    <property type="project" value="Ensembl"/>
</dbReference>
<dbReference type="GO" id="GO:0071287">
    <property type="term" value="P:cellular response to manganese ion"/>
    <property type="evidence" value="ECO:0007669"/>
    <property type="project" value="Ensembl"/>
</dbReference>
<dbReference type="GO" id="GO:0050966">
    <property type="term" value="P:detection of mechanical stimulus involved in sensory perception of pain"/>
    <property type="evidence" value="ECO:0007669"/>
    <property type="project" value="Ensembl"/>
</dbReference>
<dbReference type="GO" id="GO:0006509">
    <property type="term" value="P:membrane protein ectodomain proteolysis"/>
    <property type="evidence" value="ECO:0000315"/>
    <property type="project" value="UniProtKB"/>
</dbReference>
<dbReference type="GO" id="GO:0007613">
    <property type="term" value="P:memory"/>
    <property type="evidence" value="ECO:0000304"/>
    <property type="project" value="ARUK-UCL"/>
</dbReference>
<dbReference type="GO" id="GO:0050804">
    <property type="term" value="P:modulation of chemical synaptic transmission"/>
    <property type="evidence" value="ECO:0000316"/>
    <property type="project" value="ARUK-UCL"/>
</dbReference>
<dbReference type="GO" id="GO:0043525">
    <property type="term" value="P:positive regulation of neuron apoptotic process"/>
    <property type="evidence" value="ECO:0007669"/>
    <property type="project" value="Ensembl"/>
</dbReference>
<dbReference type="GO" id="GO:0060134">
    <property type="term" value="P:prepulse inhibition"/>
    <property type="evidence" value="ECO:0007669"/>
    <property type="project" value="Ensembl"/>
</dbReference>
<dbReference type="GO" id="GO:0099171">
    <property type="term" value="P:presynaptic modulation of chemical synaptic transmission"/>
    <property type="evidence" value="ECO:0000314"/>
    <property type="project" value="SynGO"/>
</dbReference>
<dbReference type="GO" id="GO:0006508">
    <property type="term" value="P:proteolysis"/>
    <property type="evidence" value="ECO:0000314"/>
    <property type="project" value="MGI"/>
</dbReference>
<dbReference type="GO" id="GO:0048167">
    <property type="term" value="P:regulation of synaptic plasticity"/>
    <property type="evidence" value="ECO:0000304"/>
    <property type="project" value="ARUK-UCL"/>
</dbReference>
<dbReference type="GO" id="GO:0010288">
    <property type="term" value="P:response to lead ion"/>
    <property type="evidence" value="ECO:0007669"/>
    <property type="project" value="Ensembl"/>
</dbReference>
<dbReference type="GO" id="GO:0140448">
    <property type="term" value="P:signaling receptor ligand precursor processing"/>
    <property type="evidence" value="ECO:0000315"/>
    <property type="project" value="MGI"/>
</dbReference>
<dbReference type="CDD" id="cd05473">
    <property type="entry name" value="beta_secretase_like"/>
    <property type="match status" value="1"/>
</dbReference>
<dbReference type="FunFam" id="2.40.70.10:FF:000003">
    <property type="entry name" value="Beta-secretase 1"/>
    <property type="match status" value="1"/>
</dbReference>
<dbReference type="FunFam" id="2.40.70.10:FF:000007">
    <property type="entry name" value="Beta-secretase 1"/>
    <property type="match status" value="1"/>
</dbReference>
<dbReference type="Gene3D" id="2.40.70.10">
    <property type="entry name" value="Acid Proteases"/>
    <property type="match status" value="2"/>
</dbReference>
<dbReference type="InterPro" id="IPR001461">
    <property type="entry name" value="Aspartic_peptidase_A1"/>
</dbReference>
<dbReference type="InterPro" id="IPR001969">
    <property type="entry name" value="Aspartic_peptidase_AS"/>
</dbReference>
<dbReference type="InterPro" id="IPR009119">
    <property type="entry name" value="BACE"/>
</dbReference>
<dbReference type="InterPro" id="IPR009120">
    <property type="entry name" value="BACE1"/>
</dbReference>
<dbReference type="InterPro" id="IPR033874">
    <property type="entry name" value="Memapsin-like"/>
</dbReference>
<dbReference type="InterPro" id="IPR033121">
    <property type="entry name" value="PEPTIDASE_A1"/>
</dbReference>
<dbReference type="InterPro" id="IPR021109">
    <property type="entry name" value="Peptidase_aspartic_dom_sf"/>
</dbReference>
<dbReference type="PANTHER" id="PTHR47965">
    <property type="entry name" value="ASPARTYL PROTEASE-RELATED"/>
    <property type="match status" value="1"/>
</dbReference>
<dbReference type="PANTHER" id="PTHR47965:SF69">
    <property type="entry name" value="BETA-SECRETASE 1"/>
    <property type="match status" value="1"/>
</dbReference>
<dbReference type="Pfam" id="PF00026">
    <property type="entry name" value="Asp"/>
    <property type="match status" value="1"/>
</dbReference>
<dbReference type="PRINTS" id="PR01816">
    <property type="entry name" value="BACE1"/>
</dbReference>
<dbReference type="PRINTS" id="PR01815">
    <property type="entry name" value="BACEFAMILY"/>
</dbReference>
<dbReference type="PRINTS" id="PR00792">
    <property type="entry name" value="PEPSIN"/>
</dbReference>
<dbReference type="SUPFAM" id="SSF50630">
    <property type="entry name" value="Acid proteases"/>
    <property type="match status" value="1"/>
</dbReference>
<dbReference type="PROSITE" id="PS00141">
    <property type="entry name" value="ASP_PROTEASE"/>
    <property type="match status" value="1"/>
</dbReference>
<dbReference type="PROSITE" id="PS51767">
    <property type="entry name" value="PEPTIDASE_A1"/>
    <property type="match status" value="1"/>
</dbReference>
<name>BACE1_MOUSE</name>
<evidence type="ECO:0000250" key="1"/>
<evidence type="ECO:0000250" key="2">
    <source>
        <dbReference type="UniProtKB" id="P56817"/>
    </source>
</evidence>
<evidence type="ECO:0000255" key="3"/>
<evidence type="ECO:0000255" key="4">
    <source>
        <dbReference type="PROSITE-ProRule" id="PRU01103"/>
    </source>
</evidence>
<evidence type="ECO:0000255" key="5">
    <source>
        <dbReference type="PROSITE-ProRule" id="PRU10094"/>
    </source>
</evidence>
<evidence type="ECO:0000256" key="6">
    <source>
        <dbReference type="SAM" id="MobiDB-lite"/>
    </source>
</evidence>
<evidence type="ECO:0000269" key="7">
    <source>
    </source>
</evidence>
<evidence type="ECO:0000269" key="8">
    <source>
    </source>
</evidence>
<evidence type="ECO:0000269" key="9">
    <source>
    </source>
</evidence>
<evidence type="ECO:0000269" key="10">
    <source>
    </source>
</evidence>
<evidence type="ECO:0000269" key="11">
    <source>
    </source>
</evidence>
<evidence type="ECO:0000269" key="12">
    <source>
    </source>
</evidence>
<evidence type="ECO:0000269" key="13">
    <source>
    </source>
</evidence>
<evidence type="ECO:0000269" key="14">
    <source>
    </source>
</evidence>
<evidence type="ECO:0000269" key="15">
    <source>
    </source>
</evidence>
<evidence type="ECO:0000305" key="16"/>
<evidence type="ECO:0000312" key="17">
    <source>
        <dbReference type="MGI" id="MGI:1346542"/>
    </source>
</evidence>
<evidence type="ECO:0007744" key="18">
    <source>
    </source>
</evidence>
<gene>
    <name evidence="17" type="primary">Bace1</name>
    <name type="synonym">Bace</name>
</gene>
<feature type="signal peptide" evidence="3">
    <location>
        <begin position="1"/>
        <end position="21"/>
    </location>
</feature>
<feature type="propeptide" id="PRO_0000025941" evidence="3">
    <location>
        <begin position="22"/>
        <end position="45"/>
    </location>
</feature>
<feature type="chain" id="PRO_0000025942" description="Beta-secretase 1">
    <location>
        <begin position="46"/>
        <end position="501"/>
    </location>
</feature>
<feature type="topological domain" description="Extracellular" evidence="3">
    <location>
        <begin position="22"/>
        <end position="457"/>
    </location>
</feature>
<feature type="transmembrane region" description="Helical" evidence="3">
    <location>
        <begin position="458"/>
        <end position="478"/>
    </location>
</feature>
<feature type="topological domain" description="Cytoplasmic" evidence="3">
    <location>
        <begin position="479"/>
        <end position="501"/>
    </location>
</feature>
<feature type="domain" description="Peptidase A1" evidence="4">
    <location>
        <begin position="75"/>
        <end position="416"/>
    </location>
</feature>
<feature type="region of interest" description="Disordered" evidence="6">
    <location>
        <begin position="39"/>
        <end position="58"/>
    </location>
</feature>
<feature type="region of interest" description="Interaction with RTN3" evidence="1">
    <location>
        <begin position="479"/>
        <end position="501"/>
    </location>
</feature>
<feature type="short sequence motif" description="DXXLL" evidence="2">
    <location>
        <begin position="496"/>
        <end position="500"/>
    </location>
</feature>
<feature type="active site" evidence="5">
    <location>
        <position position="93"/>
    </location>
</feature>
<feature type="active site" evidence="5">
    <location>
        <position position="289"/>
    </location>
</feature>
<feature type="modified residue" description="N6-acetyllysine" evidence="2">
    <location>
        <position position="126"/>
    </location>
</feature>
<feature type="modified residue" description="N6-acetyllysine" evidence="2">
    <location>
        <position position="275"/>
    </location>
</feature>
<feature type="modified residue" description="N6-acetyllysine" evidence="2">
    <location>
        <position position="279"/>
    </location>
</feature>
<feature type="modified residue" description="N6-acetyllysine" evidence="2">
    <location>
        <position position="285"/>
    </location>
</feature>
<feature type="modified residue" description="N6-acetyllysine" evidence="2">
    <location>
        <position position="299"/>
    </location>
</feature>
<feature type="modified residue" description="N6-acetyllysine" evidence="2">
    <location>
        <position position="300"/>
    </location>
</feature>
<feature type="modified residue" description="N6-acetyllysine" evidence="2">
    <location>
        <position position="307"/>
    </location>
</feature>
<feature type="modified residue" description="Phosphoserine" evidence="18">
    <location>
        <position position="498"/>
    </location>
</feature>
<feature type="lipid moiety-binding region" description="S-palmitoyl cysteine" evidence="9">
    <location>
        <position position="474"/>
    </location>
</feature>
<feature type="lipid moiety-binding region" description="S-palmitoyl cysteine" evidence="9">
    <location>
        <position position="478"/>
    </location>
</feature>
<feature type="lipid moiety-binding region" description="S-palmitoyl cysteine" evidence="9">
    <location>
        <position position="482"/>
    </location>
</feature>
<feature type="lipid moiety-binding region" description="S-palmitoyl cysteine" evidence="9">
    <location>
        <position position="485"/>
    </location>
</feature>
<feature type="glycosylation site" description="N-linked (GlcNAc...) asparagine" evidence="14">
    <location>
        <position position="153"/>
    </location>
</feature>
<feature type="glycosylation site" description="N-linked (GlcNAc...) asparagine" evidence="14">
    <location>
        <position position="172"/>
    </location>
</feature>
<feature type="glycosylation site" description="N-linked (GlcNAc...) asparagine" evidence="14">
    <location>
        <position position="223"/>
    </location>
</feature>
<feature type="glycosylation site" description="N-linked (GlcNAc...) asparagine" evidence="14">
    <location>
        <position position="354"/>
    </location>
</feature>
<feature type="disulfide bond" evidence="1">
    <location>
        <begin position="216"/>
        <end position="420"/>
    </location>
</feature>
<feature type="disulfide bond" evidence="1">
    <location>
        <begin position="278"/>
        <end position="443"/>
    </location>
</feature>
<feature type="disulfide bond" evidence="1">
    <location>
        <begin position="330"/>
        <end position="380"/>
    </location>
</feature>
<feature type="cross-link" description="Glycyl lysine isopeptide (Lys-Gly) (interchain with G-Cter in ubiquitin)" evidence="2">
    <location>
        <position position="501"/>
    </location>
</feature>
<feature type="mutagenesis site" description="Loss of catalytic activity." evidence="15">
    <original>D</original>
    <variation>A</variation>
    <location>
        <position position="93"/>
    </location>
</feature>
<feature type="mutagenesis site" description="Decreases bisecting N-acetylglucosamine levels. Almost abolishes bisecting N-acetylglucosamine levels but has no effect on surface expression; when associated with S-223." evidence="14">
    <original>N</original>
    <variation>S</variation>
    <location>
        <position position="153"/>
    </location>
</feature>
<feature type="mutagenesis site" description="Slightly decreases bisecting N-acetylglucosamine levels." evidence="14">
    <original>N</original>
    <variation>S</variation>
    <location>
        <position position="172"/>
    </location>
</feature>
<feature type="mutagenesis site" description="Decreases bisecting N-acetylglucosamine levels. Almost abolishes bisecting N-acetylglucosamine levels but has no effect on surface expression; when associated with S-153." evidence="14">
    <original>N</original>
    <variation>S</variation>
    <location>
        <position position="223"/>
    </location>
</feature>
<feature type="mutagenesis site" description="Slightly decreases bisecting N-acetylglucosamine levels." evidence="14">
    <original>N</original>
    <variation>S</variation>
    <location>
        <position position="354"/>
    </location>
</feature>
<feature type="mutagenesis site" description="Completely abolishes S-palmitoylation; when associated with A-478; A-482 and A-485. Doesn't affect trans-Golgi network and endosome localization; when associated with A-478; A-482 and A-485. Reduces membrane raft association; when associated with A-478; A-482 and A-485. Doesn't affect APP processing; when associated with A-478; A-482 and A-485." evidence="9">
    <original>C</original>
    <variation>A</variation>
    <location>
        <position position="474"/>
    </location>
</feature>
<feature type="mutagenesis site" description="Significantly reduces S-palmitoylation; when associated with A-482 and A-485. Completely abolishes S-palmitoylation; when associated with A-474; A-482 and A-485. Doesn't affect trans-Golgi network and endosome localization; when associated with A-474; A-482 and A-485. Reduces membrane raft association; when associated with A-474; A-482 and A-485. Doesn't affect APP processing; when associated with A-474; A-482 and A-485." evidence="9">
    <original>C</original>
    <variation>A</variation>
    <location>
        <position position="478"/>
    </location>
</feature>
<feature type="mutagenesis site" description="Significantly reduces S-palmitoylation; when associated with A-478 and A-485. Completely abolishes S-palmitoylation; when associated with A-474; A-478 and A-485. Doesn't affect trans-Golgi network and endosome localization; when associated with A-474; A-478 and A-485. Reduces membrane raft association; when associated with A-474; A-478 and A-485. Doesn't affect APP processing; when associated with A-474; A-478 and A-485." evidence="9">
    <original>C</original>
    <variation>A</variation>
    <location>
        <position position="482"/>
    </location>
</feature>
<feature type="mutagenesis site" description="Significantly reduces S-palmitoylation; when associated with A-478 and A-482. Completely abolishes S-palmitoylation; when associated with A-474; A-478 and A-482. Doesn't affect trans-Golgi network and endosome localization; when associated with A-474; A-478 and A-482. Reduces membrane raft association; when associated with A-474; A-478 and A-482. Doesn't affect APP processing; when associated with A-474; A-478 and A-482." evidence="9">
    <original>C</original>
    <variation>A</variation>
    <location>
        <position position="485"/>
    </location>
</feature>
<accession>P56818</accession>
<accession>Q544D0</accession>
<organism>
    <name type="scientific">Mus musculus</name>
    <name type="common">Mouse</name>
    <dbReference type="NCBI Taxonomy" id="10090"/>
    <lineage>
        <taxon>Eukaryota</taxon>
        <taxon>Metazoa</taxon>
        <taxon>Chordata</taxon>
        <taxon>Craniata</taxon>
        <taxon>Vertebrata</taxon>
        <taxon>Euteleostomi</taxon>
        <taxon>Mammalia</taxon>
        <taxon>Eutheria</taxon>
        <taxon>Euarchontoglires</taxon>
        <taxon>Glires</taxon>
        <taxon>Rodentia</taxon>
        <taxon>Myomorpha</taxon>
        <taxon>Muroidea</taxon>
        <taxon>Muridae</taxon>
        <taxon>Murinae</taxon>
        <taxon>Mus</taxon>
        <taxon>Mus</taxon>
    </lineage>
</organism>
<proteinExistence type="evidence at protein level"/>